<feature type="chain" id="PRO_0000248398" description="SH3-containing GRB2-like protein 3-interacting protein 1">
    <location>
        <begin position="1"/>
        <end position="827"/>
    </location>
</feature>
<feature type="domain" description="MHD" evidence="4">
    <location>
        <begin position="558"/>
        <end position="826"/>
    </location>
</feature>
<feature type="region of interest" description="Disordered" evidence="5">
    <location>
        <begin position="1"/>
        <end position="116"/>
    </location>
</feature>
<feature type="region of interest" description="Disordered" evidence="5">
    <location>
        <begin position="143"/>
        <end position="199"/>
    </location>
</feature>
<feature type="region of interest" description="Disordered" evidence="5">
    <location>
        <begin position="223"/>
        <end position="278"/>
    </location>
</feature>
<feature type="region of interest" description="Disordered" evidence="5">
    <location>
        <begin position="315"/>
        <end position="505"/>
    </location>
</feature>
<feature type="region of interest" description="Interaction with DPF motifs-containing proteins" evidence="3">
    <location>
        <begin position="560"/>
        <end position="566"/>
    </location>
</feature>
<feature type="region of interest" description="Interaction with DPF motifs-containing proteins" evidence="3">
    <location>
        <begin position="592"/>
        <end position="594"/>
    </location>
</feature>
<feature type="region of interest" description="Necessary and sufficient to mediate interaction with CANX" evidence="2">
    <location>
        <begin position="648"/>
        <end position="827"/>
    </location>
</feature>
<feature type="region of interest" description="Interaction with DPF motifs-containing proteins" evidence="3">
    <location>
        <begin position="666"/>
        <end position="669"/>
    </location>
</feature>
<feature type="region of interest" description="Interaction with DPF motifs-containing proteins" evidence="3">
    <location>
        <begin position="812"/>
        <end position="817"/>
    </location>
</feature>
<feature type="compositionally biased region" description="Basic and acidic residues" evidence="5">
    <location>
        <begin position="16"/>
        <end position="32"/>
    </location>
</feature>
<feature type="compositionally biased region" description="Basic and acidic residues" evidence="5">
    <location>
        <begin position="40"/>
        <end position="53"/>
    </location>
</feature>
<feature type="compositionally biased region" description="Pro residues" evidence="5">
    <location>
        <begin position="245"/>
        <end position="260"/>
    </location>
</feature>
<feature type="compositionally biased region" description="Polar residues" evidence="5">
    <location>
        <begin position="265"/>
        <end position="276"/>
    </location>
</feature>
<feature type="compositionally biased region" description="Basic and acidic residues" evidence="5">
    <location>
        <begin position="319"/>
        <end position="333"/>
    </location>
</feature>
<feature type="compositionally biased region" description="Low complexity" evidence="5">
    <location>
        <begin position="335"/>
        <end position="345"/>
    </location>
</feature>
<feature type="compositionally biased region" description="Pro residues" evidence="5">
    <location>
        <begin position="346"/>
        <end position="369"/>
    </location>
</feature>
<feature type="compositionally biased region" description="Basic and acidic residues" evidence="5">
    <location>
        <begin position="377"/>
        <end position="392"/>
    </location>
</feature>
<feature type="compositionally biased region" description="Low complexity" evidence="5">
    <location>
        <begin position="436"/>
        <end position="455"/>
    </location>
</feature>
<feature type="compositionally biased region" description="Pro residues" evidence="5">
    <location>
        <begin position="456"/>
        <end position="474"/>
    </location>
</feature>
<feature type="compositionally biased region" description="Low complexity" evidence="5">
    <location>
        <begin position="481"/>
        <end position="491"/>
    </location>
</feature>
<feature type="modified residue" description="Phosphoserine" evidence="2">
    <location>
        <position position="78"/>
    </location>
</feature>
<feature type="modified residue" description="Phosphoserine" evidence="1">
    <location>
        <position position="104"/>
    </location>
</feature>
<feature type="modified residue" description="Phosphoserine" evidence="1">
    <location>
        <position position="105"/>
    </location>
</feature>
<feature type="modified residue" description="Phosphoserine" evidence="1">
    <location>
        <position position="107"/>
    </location>
</feature>
<feature type="modified residue" description="Phosphoserine" evidence="2">
    <location>
        <position position="149"/>
    </location>
</feature>
<feature type="modified residue" description="Phosphoserine" evidence="2">
    <location>
        <position position="151"/>
    </location>
</feature>
<feature type="modified residue" description="Phosphoserine" evidence="2">
    <location>
        <position position="156"/>
    </location>
</feature>
<feature type="modified residue" description="Phosphoserine" evidence="1">
    <location>
        <position position="169"/>
    </location>
</feature>
<feature type="modified residue" description="Phosphothreonine" evidence="2">
    <location>
        <position position="180"/>
    </location>
</feature>
<feature type="modified residue" description="Phosphothreonine" evidence="2">
    <location>
        <position position="182"/>
    </location>
</feature>
<feature type="modified residue" description="Phosphoserine" evidence="1">
    <location>
        <position position="236"/>
    </location>
</feature>
<feature type="modified residue" description="Phosphothreonine" evidence="2">
    <location>
        <position position="247"/>
    </location>
</feature>
<feature type="modified residue" description="Phosphothreonine" evidence="2">
    <location>
        <position position="259"/>
    </location>
</feature>
<feature type="modified residue" description="Phosphoserine" evidence="2">
    <location>
        <position position="265"/>
    </location>
</feature>
<feature type="modified residue" description="Phosphoserine" evidence="2">
    <location>
        <position position="287"/>
    </location>
</feature>
<feature type="modified residue" description="Phosphoserine" evidence="2">
    <location>
        <position position="289"/>
    </location>
</feature>
<feature type="modified residue" description="Phosphoserine" evidence="2">
    <location>
        <position position="300"/>
    </location>
</feature>
<feature type="modified residue" description="Phosphoserine" evidence="2">
    <location>
        <position position="316"/>
    </location>
</feature>
<feature type="modified residue" description="Phosphoserine" evidence="2">
    <location>
        <position position="319"/>
    </location>
</feature>
<feature type="modified residue" description="Phosphothreonine" evidence="2">
    <location>
        <position position="324"/>
    </location>
</feature>
<feature type="modified residue" description="Phosphothreonine" evidence="2">
    <location>
        <position position="328"/>
    </location>
</feature>
<feature type="modified residue" description="Phosphothreonine" evidence="1">
    <location>
        <position position="335"/>
    </location>
</feature>
<feature type="modified residue" description="Phosphoserine" evidence="2">
    <location>
        <position position="371"/>
    </location>
</feature>
<feature type="modified residue" description="Phosphoserine" evidence="2">
    <location>
        <position position="398"/>
    </location>
</feature>
<feature type="modified residue" description="Phosphothreonine" evidence="2">
    <location>
        <position position="409"/>
    </location>
</feature>
<feature type="modified residue" description="Phosphoserine" evidence="2">
    <location>
        <position position="485"/>
    </location>
</feature>
<sequence length="827" mass="88451">MMEGLKKRTRKAFGIRKKEKDTDSTGSPDRDGMQPSPHELPYHSKAECAREGGNKASKKSNGAPNGFYAEIDWERYNSPELDEEGYSIRPEEPGSTKGKHFYSSSESEEEEESHKKFNIKIKPLQSKDILKNAATVDELKASIGNIALSPSPVRKSPRRSPGAIKRNLSSEEVARPRRSTPTPELTSKKPLDDTLALAPLFGPPLESAFDGHKTEVLLDQPEIWGSGQPVNPSMESPKLARPFPTGTPPPLPPKTVPATPPRTGSPLTVATGNDQAATEAKIEKLPSISDLDSIFGPVLSPKSVAVNTEETWVHFSDASPEHVTPELTPREKVVTPPAASDIPADSPTPGPPGPPGSAGPPGPPGPRNVPSPLNLEEVQKKVAEQTFIKDDYLETLSSPKECGLGQRATPPPPPPPTYRTVVSSPGPGSGSGTGTASGASSPARPATPLVPCSCSTPPPPPPRPPSRPKLPPGKPGVGDVSRPFSPPIHSSSPPPIAPLARAESTSSISSTNSLSAATTPTVENEQXSLVWFDRGKFYLTFEGSSRGPSPLTMGAQDTLPVAAAFTETVNAYFKGADPSKCIVKITGEMVLSFPAGITRHFANNPSPAALTFRVINSSRLEHVLPNPQLLCCDNTQNDANTKEFWVNMPNLMTHLKKVSEQKPQATYYNVDMLKYQVSAQGIQSTPLNLAVNWRCEPSSTDLRIDYKYNTDAMSTAVALNNVQFLVPIDGGVTKLQAVLPPAVWNAEQQRILWKIPDISQKSENGGVGSLLARFQLAEGPSKPSPLVVQFTSEGSTLSGCDIELVGAGYGFSLIKKRFAAGKYLADN</sequence>
<accession>Q6IZA3</accession>
<dbReference type="EMBL" id="AY611625">
    <property type="protein sequence ID" value="AAT37968.1"/>
    <property type="molecule type" value="mRNA"/>
</dbReference>
<dbReference type="GO" id="GO:0030122">
    <property type="term" value="C:AP-2 adaptor complex"/>
    <property type="evidence" value="ECO:0000250"/>
    <property type="project" value="UniProtKB"/>
</dbReference>
<dbReference type="GO" id="GO:0030136">
    <property type="term" value="C:clathrin-coated vesicle"/>
    <property type="evidence" value="ECO:0000250"/>
    <property type="project" value="UniProtKB"/>
</dbReference>
<dbReference type="GO" id="GO:0005737">
    <property type="term" value="C:cytoplasm"/>
    <property type="evidence" value="ECO:0000250"/>
    <property type="project" value="UniProtKB"/>
</dbReference>
<dbReference type="GO" id="GO:0005886">
    <property type="term" value="C:plasma membrane"/>
    <property type="evidence" value="ECO:0000250"/>
    <property type="project" value="UniProtKB"/>
</dbReference>
<dbReference type="GO" id="GO:0098793">
    <property type="term" value="C:presynapse"/>
    <property type="evidence" value="ECO:0007669"/>
    <property type="project" value="GOC"/>
</dbReference>
<dbReference type="GO" id="GO:0008017">
    <property type="term" value="F:microtubule binding"/>
    <property type="evidence" value="ECO:0000250"/>
    <property type="project" value="UniProtKB"/>
</dbReference>
<dbReference type="GO" id="GO:0005543">
    <property type="term" value="F:phospholipid binding"/>
    <property type="evidence" value="ECO:0000250"/>
    <property type="project" value="UniProtKB"/>
</dbReference>
<dbReference type="GO" id="GO:0048268">
    <property type="term" value="P:clathrin coat assembly"/>
    <property type="evidence" value="ECO:0007669"/>
    <property type="project" value="TreeGrafter"/>
</dbReference>
<dbReference type="GO" id="GO:0072583">
    <property type="term" value="P:clathrin-dependent endocytosis"/>
    <property type="evidence" value="ECO:0007669"/>
    <property type="project" value="InterPro"/>
</dbReference>
<dbReference type="GO" id="GO:0097009">
    <property type="term" value="P:energy homeostasis"/>
    <property type="evidence" value="ECO:0000315"/>
    <property type="project" value="UniProtKB"/>
</dbReference>
<dbReference type="GO" id="GO:2000253">
    <property type="term" value="P:positive regulation of feeding behavior"/>
    <property type="evidence" value="ECO:0000315"/>
    <property type="project" value="UniProtKB"/>
</dbReference>
<dbReference type="GO" id="GO:0048260">
    <property type="term" value="P:positive regulation of receptor-mediated endocytosis"/>
    <property type="evidence" value="ECO:0000250"/>
    <property type="project" value="UniProtKB"/>
</dbReference>
<dbReference type="GO" id="GO:0002021">
    <property type="term" value="P:response to dietary excess"/>
    <property type="evidence" value="ECO:0000315"/>
    <property type="project" value="UniProtKB"/>
</dbReference>
<dbReference type="GO" id="GO:0042594">
    <property type="term" value="P:response to starvation"/>
    <property type="evidence" value="ECO:0000270"/>
    <property type="project" value="UniProtKB"/>
</dbReference>
<dbReference type="GO" id="GO:0048488">
    <property type="term" value="P:synaptic vesicle endocytosis"/>
    <property type="evidence" value="ECO:0007669"/>
    <property type="project" value="TreeGrafter"/>
</dbReference>
<dbReference type="CDD" id="cd09266">
    <property type="entry name" value="SGIP1_MHD"/>
    <property type="match status" value="1"/>
</dbReference>
<dbReference type="FunFam" id="2.60.40.1170:FF:000005">
    <property type="entry name" value="SH3-containing GRB2-like protein 3-interacting protein 1 isoform X3"/>
    <property type="match status" value="1"/>
</dbReference>
<dbReference type="InterPro" id="IPR036168">
    <property type="entry name" value="AP2_Mu_C_sf"/>
</dbReference>
<dbReference type="InterPro" id="IPR028565">
    <property type="entry name" value="MHD"/>
</dbReference>
<dbReference type="InterPro" id="IPR018808">
    <property type="entry name" value="Muniscin_C"/>
</dbReference>
<dbReference type="InterPro" id="IPR037984">
    <property type="entry name" value="SGIP1_MHD"/>
</dbReference>
<dbReference type="PANTHER" id="PTHR23065:SF8">
    <property type="entry name" value="F-BAR DOMAIN ONLY PROTEIN 2"/>
    <property type="match status" value="1"/>
</dbReference>
<dbReference type="PANTHER" id="PTHR23065">
    <property type="entry name" value="PROLINE-SERINE-THREONINE PHOSPHATASE INTERACTING PROTEIN 1"/>
    <property type="match status" value="1"/>
</dbReference>
<dbReference type="Pfam" id="PF10291">
    <property type="entry name" value="muHD"/>
    <property type="match status" value="1"/>
</dbReference>
<dbReference type="SUPFAM" id="SSF49447">
    <property type="entry name" value="Second domain of Mu2 adaptin subunit (ap50) of ap2 adaptor"/>
    <property type="match status" value="1"/>
</dbReference>
<dbReference type="PROSITE" id="PS51072">
    <property type="entry name" value="MHD"/>
    <property type="match status" value="1"/>
</dbReference>
<keyword id="KW-0168">Coated pit</keyword>
<keyword id="KW-0254">Endocytosis</keyword>
<keyword id="KW-0472">Membrane</keyword>
<keyword id="KW-0597">Phosphoprotein</keyword>
<comment type="function">
    <text evidence="6">May function in clathrin-mediated endocytosis. Has both a membrane binding/tubulating activity and the ability to recruit proteins essential to the formation of functional clathrin-coated pits. Has a preference for membranes enriched in phosphatidylserine and phosphoinositides and is required for the endocytosis of the transferrin receptor. May also bind tubulin. May play a role in the regulation of energy homeostasis.</text>
</comment>
<comment type="subunit">
    <text evidence="2 3 6 7">Interacts with proteins essential or regulating the formation of functional clathrin-coated pits (Probable). Interacts with CANX (By similarity). Interacts with AP2A1 (By similarity). Interacts with EPS15 (By similarity). Interacts with SH3GL3 (PubMed:15919751). Interacts with AMPH (By similarity). Interacts with ITSN1 (via SH3 domains) (By similarity). Interacts with and REPS1 (By similarity).</text>
</comment>
<comment type="subcellular location">
    <subcellularLocation>
        <location evidence="3">Membrane</location>
        <location evidence="3">Clathrin-coated pit</location>
        <topology evidence="3">Peripheral membrane protein</topology>
        <orientation evidence="3">Cytoplasmic side</orientation>
    </subcellularLocation>
</comment>
<comment type="tissue specificity">
    <text evidence="6">Specifically expressed in brain. Also detected at lower levels in spleen and adipose tissue.</text>
</comment>
<comment type="miscellaneous">
    <text>Brain-specific depletion by RNAi leads to body weight reduction due to reduction of food intake without concomitant reduction in metabolic rate.</text>
</comment>
<gene>
    <name type="primary">SGIP1</name>
</gene>
<name>SGIP1_PSAOB</name>
<protein>
    <recommendedName>
        <fullName>SH3-containing GRB2-like protein 3-interacting protein 1</fullName>
    </recommendedName>
    <alternativeName>
        <fullName>Endophilin-3-interacting protein</fullName>
    </alternativeName>
</protein>
<reference key="1">
    <citation type="journal article" date="2005" name="Endocrinology">
        <title>Src homology 3-domain growth factor receptor-bound 2-like (endophilin) interacting protein 1, a novel neuronal protein that regulates energy balance.</title>
        <authorList>
            <person name="Trevaskis J."/>
            <person name="Walder K."/>
            <person name="Foletta V."/>
            <person name="Kerr-Bayles L."/>
            <person name="McMillan J."/>
            <person name="Cooper A."/>
            <person name="Lee S."/>
            <person name="Bolton K."/>
            <person name="Prior M."/>
            <person name="Fahey R."/>
            <person name="Whitecross K."/>
            <person name="Morton G.J."/>
            <person name="Schwartz M.W."/>
            <person name="Collier G.R."/>
        </authorList>
    </citation>
    <scope>NUCLEOTIDE SEQUENCE [MRNA]</scope>
    <scope>FUNCTION</scope>
    <scope>TISSUE SPECIFICITY</scope>
    <scope>INTERACTION WITH SH3GL3</scope>
    <source>
        <tissue>Hypothalamus</tissue>
    </source>
</reference>
<proteinExistence type="evidence at protein level"/>
<evidence type="ECO:0000250" key="1">
    <source>
        <dbReference type="UniProtKB" id="P0DJJ3"/>
    </source>
</evidence>
<evidence type="ECO:0000250" key="2">
    <source>
        <dbReference type="UniProtKB" id="Q8VD37"/>
    </source>
</evidence>
<evidence type="ECO:0000250" key="3">
    <source>
        <dbReference type="UniProtKB" id="Q9BQI5"/>
    </source>
</evidence>
<evidence type="ECO:0000255" key="4">
    <source>
        <dbReference type="PROSITE-ProRule" id="PRU00404"/>
    </source>
</evidence>
<evidence type="ECO:0000256" key="5">
    <source>
        <dbReference type="SAM" id="MobiDB-lite"/>
    </source>
</evidence>
<evidence type="ECO:0000269" key="6">
    <source>
    </source>
</evidence>
<evidence type="ECO:0000305" key="7"/>
<organism>
    <name type="scientific">Psammomys obesus</name>
    <name type="common">Fat sand rat</name>
    <dbReference type="NCBI Taxonomy" id="48139"/>
    <lineage>
        <taxon>Eukaryota</taxon>
        <taxon>Metazoa</taxon>
        <taxon>Chordata</taxon>
        <taxon>Craniata</taxon>
        <taxon>Vertebrata</taxon>
        <taxon>Euteleostomi</taxon>
        <taxon>Mammalia</taxon>
        <taxon>Eutheria</taxon>
        <taxon>Euarchontoglires</taxon>
        <taxon>Glires</taxon>
        <taxon>Rodentia</taxon>
        <taxon>Myomorpha</taxon>
        <taxon>Muroidea</taxon>
        <taxon>Muridae</taxon>
        <taxon>Gerbillinae</taxon>
        <taxon>Psammomys</taxon>
    </lineage>
</organism>